<name>G6PI_PEDPA</name>
<reference key="1">
    <citation type="journal article" date="2006" name="Proc. Natl. Acad. Sci. U.S.A.">
        <title>Comparative genomics of the lactic acid bacteria.</title>
        <authorList>
            <person name="Makarova K.S."/>
            <person name="Slesarev A."/>
            <person name="Wolf Y.I."/>
            <person name="Sorokin A."/>
            <person name="Mirkin B."/>
            <person name="Koonin E.V."/>
            <person name="Pavlov A."/>
            <person name="Pavlova N."/>
            <person name="Karamychev V."/>
            <person name="Polouchine N."/>
            <person name="Shakhova V."/>
            <person name="Grigoriev I."/>
            <person name="Lou Y."/>
            <person name="Rohksar D."/>
            <person name="Lucas S."/>
            <person name="Huang K."/>
            <person name="Goodstein D.M."/>
            <person name="Hawkins T."/>
            <person name="Plengvidhya V."/>
            <person name="Welker D."/>
            <person name="Hughes J."/>
            <person name="Goh Y."/>
            <person name="Benson A."/>
            <person name="Baldwin K."/>
            <person name="Lee J.-H."/>
            <person name="Diaz-Muniz I."/>
            <person name="Dosti B."/>
            <person name="Smeianov V."/>
            <person name="Wechter W."/>
            <person name="Barabote R."/>
            <person name="Lorca G."/>
            <person name="Altermann E."/>
            <person name="Barrangou R."/>
            <person name="Ganesan B."/>
            <person name="Xie Y."/>
            <person name="Rawsthorne H."/>
            <person name="Tamir D."/>
            <person name="Parker C."/>
            <person name="Breidt F."/>
            <person name="Broadbent J.R."/>
            <person name="Hutkins R."/>
            <person name="O'Sullivan D."/>
            <person name="Steele J."/>
            <person name="Unlu G."/>
            <person name="Saier M.H. Jr."/>
            <person name="Klaenhammer T."/>
            <person name="Richardson P."/>
            <person name="Kozyavkin S."/>
            <person name="Weimer B.C."/>
            <person name="Mills D.A."/>
        </authorList>
    </citation>
    <scope>NUCLEOTIDE SEQUENCE [LARGE SCALE GENOMIC DNA]</scope>
    <source>
        <strain>ATCC 25745 / CCUG 21536 / LMG 10740 / 183-1w</strain>
    </source>
</reference>
<organism>
    <name type="scientific">Pediococcus pentosaceus (strain ATCC 25745 / CCUG 21536 / LMG 10740 / 183-1w)</name>
    <dbReference type="NCBI Taxonomy" id="278197"/>
    <lineage>
        <taxon>Bacteria</taxon>
        <taxon>Bacillati</taxon>
        <taxon>Bacillota</taxon>
        <taxon>Bacilli</taxon>
        <taxon>Lactobacillales</taxon>
        <taxon>Lactobacillaceae</taxon>
        <taxon>Pediococcus</taxon>
    </lineage>
</organism>
<keyword id="KW-0963">Cytoplasm</keyword>
<keyword id="KW-0312">Gluconeogenesis</keyword>
<keyword id="KW-0324">Glycolysis</keyword>
<keyword id="KW-0413">Isomerase</keyword>
<gene>
    <name evidence="1" type="primary">pgi</name>
    <name type="ordered locus">PEPE_1350</name>
</gene>
<accession>Q03EI3</accession>
<dbReference type="EC" id="5.3.1.9" evidence="1"/>
<dbReference type="EMBL" id="CP000422">
    <property type="protein sequence ID" value="ABJ68389.1"/>
    <property type="molecule type" value="Genomic_DNA"/>
</dbReference>
<dbReference type="RefSeq" id="WP_002833654.1">
    <property type="nucleotide sequence ID" value="NC_008525.1"/>
</dbReference>
<dbReference type="SMR" id="Q03EI3"/>
<dbReference type="STRING" id="278197.PEPE_1350"/>
<dbReference type="GeneID" id="33061365"/>
<dbReference type="KEGG" id="ppe:PEPE_1350"/>
<dbReference type="eggNOG" id="COG0166">
    <property type="taxonomic scope" value="Bacteria"/>
</dbReference>
<dbReference type="HOGENOM" id="CLU_037303_0_1_9"/>
<dbReference type="OrthoDB" id="140919at2"/>
<dbReference type="UniPathway" id="UPA00109">
    <property type="reaction ID" value="UER00181"/>
</dbReference>
<dbReference type="UniPathway" id="UPA00138"/>
<dbReference type="Proteomes" id="UP000000773">
    <property type="component" value="Chromosome"/>
</dbReference>
<dbReference type="GO" id="GO:0005829">
    <property type="term" value="C:cytosol"/>
    <property type="evidence" value="ECO:0007669"/>
    <property type="project" value="TreeGrafter"/>
</dbReference>
<dbReference type="GO" id="GO:0097367">
    <property type="term" value="F:carbohydrate derivative binding"/>
    <property type="evidence" value="ECO:0007669"/>
    <property type="project" value="InterPro"/>
</dbReference>
<dbReference type="GO" id="GO:0004347">
    <property type="term" value="F:glucose-6-phosphate isomerase activity"/>
    <property type="evidence" value="ECO:0007669"/>
    <property type="project" value="UniProtKB-UniRule"/>
</dbReference>
<dbReference type="GO" id="GO:0048029">
    <property type="term" value="F:monosaccharide binding"/>
    <property type="evidence" value="ECO:0007669"/>
    <property type="project" value="TreeGrafter"/>
</dbReference>
<dbReference type="GO" id="GO:0006094">
    <property type="term" value="P:gluconeogenesis"/>
    <property type="evidence" value="ECO:0007669"/>
    <property type="project" value="UniProtKB-UniRule"/>
</dbReference>
<dbReference type="GO" id="GO:0051156">
    <property type="term" value="P:glucose 6-phosphate metabolic process"/>
    <property type="evidence" value="ECO:0007669"/>
    <property type="project" value="TreeGrafter"/>
</dbReference>
<dbReference type="GO" id="GO:0006096">
    <property type="term" value="P:glycolytic process"/>
    <property type="evidence" value="ECO:0007669"/>
    <property type="project" value="UniProtKB-UniRule"/>
</dbReference>
<dbReference type="CDD" id="cd05015">
    <property type="entry name" value="SIS_PGI_1"/>
    <property type="match status" value="1"/>
</dbReference>
<dbReference type="CDD" id="cd05016">
    <property type="entry name" value="SIS_PGI_2"/>
    <property type="match status" value="1"/>
</dbReference>
<dbReference type="FunFam" id="3.40.50.10490:FF:000015">
    <property type="entry name" value="Glucose-6-phosphate isomerase"/>
    <property type="match status" value="1"/>
</dbReference>
<dbReference type="FunFam" id="3.40.50.10490:FF:000016">
    <property type="entry name" value="Glucose-6-phosphate isomerase"/>
    <property type="match status" value="1"/>
</dbReference>
<dbReference type="Gene3D" id="3.40.50.10490">
    <property type="entry name" value="Glucose-6-phosphate isomerase like protein, domain 1"/>
    <property type="match status" value="2"/>
</dbReference>
<dbReference type="HAMAP" id="MF_00473">
    <property type="entry name" value="G6P_isomerase"/>
    <property type="match status" value="1"/>
</dbReference>
<dbReference type="InterPro" id="IPR001672">
    <property type="entry name" value="G6P_Isomerase"/>
</dbReference>
<dbReference type="InterPro" id="IPR018189">
    <property type="entry name" value="Phosphoglucose_isomerase_CS"/>
</dbReference>
<dbReference type="InterPro" id="IPR046348">
    <property type="entry name" value="SIS_dom_sf"/>
</dbReference>
<dbReference type="InterPro" id="IPR035476">
    <property type="entry name" value="SIS_PGI_1"/>
</dbReference>
<dbReference type="InterPro" id="IPR035482">
    <property type="entry name" value="SIS_PGI_2"/>
</dbReference>
<dbReference type="NCBIfam" id="NF010697">
    <property type="entry name" value="PRK14097.1"/>
    <property type="match status" value="1"/>
</dbReference>
<dbReference type="PANTHER" id="PTHR11469">
    <property type="entry name" value="GLUCOSE-6-PHOSPHATE ISOMERASE"/>
    <property type="match status" value="1"/>
</dbReference>
<dbReference type="PANTHER" id="PTHR11469:SF1">
    <property type="entry name" value="GLUCOSE-6-PHOSPHATE ISOMERASE"/>
    <property type="match status" value="1"/>
</dbReference>
<dbReference type="Pfam" id="PF00342">
    <property type="entry name" value="PGI"/>
    <property type="match status" value="1"/>
</dbReference>
<dbReference type="PRINTS" id="PR00662">
    <property type="entry name" value="G6PISOMERASE"/>
</dbReference>
<dbReference type="SUPFAM" id="SSF53697">
    <property type="entry name" value="SIS domain"/>
    <property type="match status" value="1"/>
</dbReference>
<dbReference type="PROSITE" id="PS00765">
    <property type="entry name" value="P_GLUCOSE_ISOMERASE_1"/>
    <property type="match status" value="1"/>
</dbReference>
<dbReference type="PROSITE" id="PS00174">
    <property type="entry name" value="P_GLUCOSE_ISOMERASE_2"/>
    <property type="match status" value="1"/>
</dbReference>
<dbReference type="PROSITE" id="PS51463">
    <property type="entry name" value="P_GLUCOSE_ISOMERASE_3"/>
    <property type="match status" value="1"/>
</dbReference>
<comment type="function">
    <text evidence="1">Catalyzes the reversible isomerization of glucose-6-phosphate to fructose-6-phosphate.</text>
</comment>
<comment type="catalytic activity">
    <reaction evidence="1">
        <text>alpha-D-glucose 6-phosphate = beta-D-fructose 6-phosphate</text>
        <dbReference type="Rhea" id="RHEA:11816"/>
        <dbReference type="ChEBI" id="CHEBI:57634"/>
        <dbReference type="ChEBI" id="CHEBI:58225"/>
        <dbReference type="EC" id="5.3.1.9"/>
    </reaction>
</comment>
<comment type="pathway">
    <text evidence="1">Carbohydrate biosynthesis; gluconeogenesis.</text>
</comment>
<comment type="pathway">
    <text evidence="1">Carbohydrate degradation; glycolysis; D-glyceraldehyde 3-phosphate and glycerone phosphate from D-glucose: step 2/4.</text>
</comment>
<comment type="subcellular location">
    <subcellularLocation>
        <location evidence="1">Cytoplasm</location>
    </subcellularLocation>
</comment>
<comment type="similarity">
    <text evidence="1">Belongs to the GPI family.</text>
</comment>
<proteinExistence type="inferred from homology"/>
<protein>
    <recommendedName>
        <fullName evidence="1">Glucose-6-phosphate isomerase</fullName>
        <shortName evidence="1">GPI</shortName>
        <ecNumber evidence="1">5.3.1.9</ecNumber>
    </recommendedName>
    <alternativeName>
        <fullName evidence="1">Phosphoglucose isomerase</fullName>
        <shortName evidence="1">PGI</shortName>
    </alternativeName>
    <alternativeName>
        <fullName evidence="1">Phosphohexose isomerase</fullName>
        <shortName evidence="1">PHI</shortName>
    </alternativeName>
</protein>
<feature type="chain" id="PRO_1000013995" description="Glucose-6-phosphate isomerase">
    <location>
        <begin position="1"/>
        <end position="449"/>
    </location>
</feature>
<feature type="active site" description="Proton donor" evidence="1">
    <location>
        <position position="291"/>
    </location>
</feature>
<feature type="active site" evidence="1">
    <location>
        <position position="312"/>
    </location>
</feature>
<feature type="active site" evidence="1">
    <location>
        <position position="426"/>
    </location>
</feature>
<sequence>MAHISFDSSNVADFVHENELAEIQPLVTAADQILRDGSGAGSDFRGWIDLPSNYDKDEFARIKKAADKIRNDSEVFVAIGIGGSYLGARAAIDFLNNTFYNLLTKEQRNGAPQVIFAGNSISSTYLADVLNLIGDRDFSINVISKSGTTTEPAIAFRVLKEKLIKKYGEEEAKKRIYATTDRAKGALKTEADAENYEEFVVPDDIGGRFSVLSAVGLLPIAVAGGDIDQLMKGAEDASNEYKDADVTKNEAYKYAALRNILYRKGYTTELLENYEPTLQYFGEWWKQLMGESEGKDQKGIYPSSANFSTDLHSLGQYIQEGRRNLMETVINVEKPNHDIDIPKADQDLDGLRYLEGRTMDEVNKKAYQGVTLAHNDGGVPVMTVNIPDQTAYTLGYMIYFFEAAVAVSGYLNGINPFNQPGVEAYKSNMFALLGKPGYEDKTAELNARL</sequence>
<evidence type="ECO:0000255" key="1">
    <source>
        <dbReference type="HAMAP-Rule" id="MF_00473"/>
    </source>
</evidence>